<reference key="1">
    <citation type="journal article" date="2009" name="PLoS ONE">
        <title>Salmonella paratyphi C: genetic divergence from Salmonella choleraesuis and pathogenic convergence with Salmonella typhi.</title>
        <authorList>
            <person name="Liu W.-Q."/>
            <person name="Feng Y."/>
            <person name="Wang Y."/>
            <person name="Zou Q.-H."/>
            <person name="Chen F."/>
            <person name="Guo J.-T."/>
            <person name="Peng Y.-H."/>
            <person name="Jin Y."/>
            <person name="Li Y.-G."/>
            <person name="Hu S.-N."/>
            <person name="Johnston R.N."/>
            <person name="Liu G.-R."/>
            <person name="Liu S.-L."/>
        </authorList>
    </citation>
    <scope>NUCLEOTIDE SEQUENCE [LARGE SCALE GENOMIC DNA]</scope>
    <source>
        <strain>RKS4594</strain>
    </source>
</reference>
<proteinExistence type="inferred from homology"/>
<comment type="function">
    <text evidence="1">Catalyzes the interconversion of beta-pyran and beta-furan forms of D-ribose.</text>
</comment>
<comment type="catalytic activity">
    <reaction evidence="1">
        <text>beta-D-ribopyranose = beta-D-ribofuranose</text>
        <dbReference type="Rhea" id="RHEA:25432"/>
        <dbReference type="ChEBI" id="CHEBI:27476"/>
        <dbReference type="ChEBI" id="CHEBI:47002"/>
        <dbReference type="EC" id="5.4.99.62"/>
    </reaction>
</comment>
<comment type="pathway">
    <text evidence="1">Carbohydrate metabolism; D-ribose degradation; D-ribose 5-phosphate from beta-D-ribopyranose: step 1/2.</text>
</comment>
<comment type="subunit">
    <text evidence="1">Homodecamer.</text>
</comment>
<comment type="subcellular location">
    <subcellularLocation>
        <location evidence="1">Cytoplasm</location>
    </subcellularLocation>
</comment>
<comment type="similarity">
    <text evidence="1">Belongs to the RbsD / FucU family. RbsD subfamily.</text>
</comment>
<accession>C0Q2P8</accession>
<gene>
    <name evidence="1" type="primary">rbsD</name>
    <name type="ordered locus">SPC_3966</name>
</gene>
<sequence length="139" mass="15189">MKKGTVLNSEISSVISRLGHTDTLVVCDAGLPIPNSTARIDMALTQGVPSFMQVVDVVTREMQVEAAILATEIKQQNPQLHETLLTHLEQLQQHQGNTIKISYTTHEQFKKLTADSQAVIRSGECSPYANVILCAGVTF</sequence>
<dbReference type="EC" id="5.4.99.62" evidence="1"/>
<dbReference type="EMBL" id="CP000857">
    <property type="protein sequence ID" value="ACN48034.1"/>
    <property type="molecule type" value="Genomic_DNA"/>
</dbReference>
<dbReference type="RefSeq" id="WP_000715944.1">
    <property type="nucleotide sequence ID" value="NC_012125.1"/>
</dbReference>
<dbReference type="SMR" id="C0Q2P8"/>
<dbReference type="KEGG" id="sei:SPC_3966"/>
<dbReference type="HOGENOM" id="CLU_135498_0_0_6"/>
<dbReference type="UniPathway" id="UPA00916">
    <property type="reaction ID" value="UER00888"/>
</dbReference>
<dbReference type="Proteomes" id="UP000001599">
    <property type="component" value="Chromosome"/>
</dbReference>
<dbReference type="GO" id="GO:0005829">
    <property type="term" value="C:cytosol"/>
    <property type="evidence" value="ECO:0007669"/>
    <property type="project" value="TreeGrafter"/>
</dbReference>
<dbReference type="GO" id="GO:0062193">
    <property type="term" value="F:D-ribose pyranase activity"/>
    <property type="evidence" value="ECO:0007669"/>
    <property type="project" value="UniProtKB-EC"/>
</dbReference>
<dbReference type="GO" id="GO:0016872">
    <property type="term" value="F:intramolecular lyase activity"/>
    <property type="evidence" value="ECO:0007669"/>
    <property type="project" value="UniProtKB-UniRule"/>
</dbReference>
<dbReference type="GO" id="GO:0048029">
    <property type="term" value="F:monosaccharide binding"/>
    <property type="evidence" value="ECO:0007669"/>
    <property type="project" value="InterPro"/>
</dbReference>
<dbReference type="GO" id="GO:0019303">
    <property type="term" value="P:D-ribose catabolic process"/>
    <property type="evidence" value="ECO:0007669"/>
    <property type="project" value="UniProtKB-UniRule"/>
</dbReference>
<dbReference type="FunFam" id="3.40.1650.10:FF:000002">
    <property type="entry name" value="D-ribose pyranase"/>
    <property type="match status" value="1"/>
</dbReference>
<dbReference type="Gene3D" id="3.40.1650.10">
    <property type="entry name" value="RbsD-like domain"/>
    <property type="match status" value="1"/>
</dbReference>
<dbReference type="HAMAP" id="MF_01661">
    <property type="entry name" value="D_rib_pyranase"/>
    <property type="match status" value="1"/>
</dbReference>
<dbReference type="InterPro" id="IPR023064">
    <property type="entry name" value="D-ribose_pyranase"/>
</dbReference>
<dbReference type="InterPro" id="IPR023750">
    <property type="entry name" value="RbsD-like_sf"/>
</dbReference>
<dbReference type="InterPro" id="IPR007721">
    <property type="entry name" value="RbsD_FucU"/>
</dbReference>
<dbReference type="NCBIfam" id="NF008761">
    <property type="entry name" value="PRK11797.1"/>
    <property type="match status" value="1"/>
</dbReference>
<dbReference type="PANTHER" id="PTHR37831">
    <property type="entry name" value="D-RIBOSE PYRANASE"/>
    <property type="match status" value="1"/>
</dbReference>
<dbReference type="PANTHER" id="PTHR37831:SF1">
    <property type="entry name" value="D-RIBOSE PYRANASE"/>
    <property type="match status" value="1"/>
</dbReference>
<dbReference type="Pfam" id="PF05025">
    <property type="entry name" value="RbsD_FucU"/>
    <property type="match status" value="1"/>
</dbReference>
<dbReference type="SUPFAM" id="SSF102546">
    <property type="entry name" value="RbsD-like"/>
    <property type="match status" value="1"/>
</dbReference>
<organism>
    <name type="scientific">Salmonella paratyphi C (strain RKS4594)</name>
    <dbReference type="NCBI Taxonomy" id="476213"/>
    <lineage>
        <taxon>Bacteria</taxon>
        <taxon>Pseudomonadati</taxon>
        <taxon>Pseudomonadota</taxon>
        <taxon>Gammaproteobacteria</taxon>
        <taxon>Enterobacterales</taxon>
        <taxon>Enterobacteriaceae</taxon>
        <taxon>Salmonella</taxon>
    </lineage>
</organism>
<evidence type="ECO:0000255" key="1">
    <source>
        <dbReference type="HAMAP-Rule" id="MF_01661"/>
    </source>
</evidence>
<name>RBSD_SALPC</name>
<protein>
    <recommendedName>
        <fullName evidence="1">D-ribose pyranase</fullName>
        <ecNumber evidence="1">5.4.99.62</ecNumber>
    </recommendedName>
</protein>
<feature type="chain" id="PRO_1000187164" description="D-ribose pyranase">
    <location>
        <begin position="1"/>
        <end position="139"/>
    </location>
</feature>
<feature type="active site" description="Proton donor" evidence="1">
    <location>
        <position position="20"/>
    </location>
</feature>
<feature type="binding site" evidence="1">
    <location>
        <position position="28"/>
    </location>
    <ligand>
        <name>substrate</name>
    </ligand>
</feature>
<feature type="binding site" evidence="1">
    <location>
        <position position="106"/>
    </location>
    <ligand>
        <name>substrate</name>
    </ligand>
</feature>
<feature type="binding site" evidence="1">
    <location>
        <begin position="128"/>
        <end position="130"/>
    </location>
    <ligand>
        <name>substrate</name>
    </ligand>
</feature>
<keyword id="KW-0119">Carbohydrate metabolism</keyword>
<keyword id="KW-0963">Cytoplasm</keyword>
<keyword id="KW-0413">Isomerase</keyword>